<keyword id="KW-0963">Cytoplasm</keyword>
<keyword id="KW-0275">Fatty acid biosynthesis</keyword>
<keyword id="KW-0276">Fatty acid metabolism</keyword>
<keyword id="KW-0444">Lipid biosynthesis</keyword>
<keyword id="KW-0443">Lipid metabolism</keyword>
<keyword id="KW-0596">Phosphopantetheine</keyword>
<keyword id="KW-0597">Phosphoprotein</keyword>
<keyword id="KW-1185">Reference proteome</keyword>
<sequence length="78" mass="8785">MSEVEKKVIDLVVDKLNVEASEVTREASFSNDLGADSLDTVELMMNFEKEFNMSIPDDQAQEIKTVGDAIDYIEKNLK</sequence>
<organism>
    <name type="scientific">Porphyromonas gingivalis (strain ATCC BAA-308 / W83)</name>
    <dbReference type="NCBI Taxonomy" id="242619"/>
    <lineage>
        <taxon>Bacteria</taxon>
        <taxon>Pseudomonadati</taxon>
        <taxon>Bacteroidota</taxon>
        <taxon>Bacteroidia</taxon>
        <taxon>Bacteroidales</taxon>
        <taxon>Porphyromonadaceae</taxon>
        <taxon>Porphyromonas</taxon>
    </lineage>
</organism>
<comment type="function">
    <text evidence="1">Carrier of the growing fatty acid chain in fatty acid biosynthesis.</text>
</comment>
<comment type="pathway">
    <text evidence="1">Lipid metabolism; fatty acid biosynthesis.</text>
</comment>
<comment type="subcellular location">
    <subcellularLocation>
        <location evidence="1">Cytoplasm</location>
    </subcellularLocation>
</comment>
<comment type="PTM">
    <text evidence="1">4'-phosphopantetheine is transferred from CoA to a specific serine of apo-ACP by AcpS. This modification is essential for activity because fatty acids are bound in thioester linkage to the sulfhydryl of the prosthetic group.</text>
</comment>
<comment type="similarity">
    <text evidence="1">Belongs to the acyl carrier protein (ACP) family.</text>
</comment>
<feature type="chain" id="PRO_0000180164" description="Acyl carrier protein">
    <location>
        <begin position="1"/>
        <end position="78"/>
    </location>
</feature>
<feature type="domain" description="Carrier" evidence="2">
    <location>
        <begin position="1"/>
        <end position="77"/>
    </location>
</feature>
<feature type="modified residue" description="O-(pantetheine 4'-phosphoryl)serine" evidence="2">
    <location>
        <position position="37"/>
    </location>
</feature>
<accession>Q7MU10</accession>
<proteinExistence type="inferred from homology"/>
<name>ACP_PORGI</name>
<evidence type="ECO:0000255" key="1">
    <source>
        <dbReference type="HAMAP-Rule" id="MF_01217"/>
    </source>
</evidence>
<evidence type="ECO:0000255" key="2">
    <source>
        <dbReference type="PROSITE-ProRule" id="PRU00258"/>
    </source>
</evidence>
<dbReference type="EMBL" id="AE015924">
    <property type="protein sequence ID" value="AAQ66766.1"/>
    <property type="molecule type" value="Genomic_DNA"/>
</dbReference>
<dbReference type="RefSeq" id="WP_004584733.1">
    <property type="nucleotide sequence ID" value="NC_002950.2"/>
</dbReference>
<dbReference type="SMR" id="Q7MU10"/>
<dbReference type="STRING" id="242619.PG_1765"/>
<dbReference type="EnsemblBacteria" id="AAQ66766">
    <property type="protein sequence ID" value="AAQ66766"/>
    <property type="gene ID" value="PG_1765"/>
</dbReference>
<dbReference type="GeneID" id="29256870"/>
<dbReference type="KEGG" id="pgi:PG_1765"/>
<dbReference type="eggNOG" id="COG0236">
    <property type="taxonomic scope" value="Bacteria"/>
</dbReference>
<dbReference type="HOGENOM" id="CLU_108696_5_1_10"/>
<dbReference type="UniPathway" id="UPA00094"/>
<dbReference type="Proteomes" id="UP000000588">
    <property type="component" value="Chromosome"/>
</dbReference>
<dbReference type="GO" id="GO:0005829">
    <property type="term" value="C:cytosol"/>
    <property type="evidence" value="ECO:0007669"/>
    <property type="project" value="TreeGrafter"/>
</dbReference>
<dbReference type="GO" id="GO:0016020">
    <property type="term" value="C:membrane"/>
    <property type="evidence" value="ECO:0007669"/>
    <property type="project" value="GOC"/>
</dbReference>
<dbReference type="GO" id="GO:0000035">
    <property type="term" value="F:acyl binding"/>
    <property type="evidence" value="ECO:0007669"/>
    <property type="project" value="TreeGrafter"/>
</dbReference>
<dbReference type="GO" id="GO:0000036">
    <property type="term" value="F:acyl carrier activity"/>
    <property type="evidence" value="ECO:0007669"/>
    <property type="project" value="UniProtKB-UniRule"/>
</dbReference>
<dbReference type="GO" id="GO:0009245">
    <property type="term" value="P:lipid A biosynthetic process"/>
    <property type="evidence" value="ECO:0007669"/>
    <property type="project" value="TreeGrafter"/>
</dbReference>
<dbReference type="FunFam" id="1.10.1200.10:FF:000003">
    <property type="entry name" value="Acyl carrier protein"/>
    <property type="match status" value="1"/>
</dbReference>
<dbReference type="Gene3D" id="1.10.1200.10">
    <property type="entry name" value="ACP-like"/>
    <property type="match status" value="1"/>
</dbReference>
<dbReference type="HAMAP" id="MF_01217">
    <property type="entry name" value="Acyl_carrier"/>
    <property type="match status" value="1"/>
</dbReference>
<dbReference type="InterPro" id="IPR003231">
    <property type="entry name" value="ACP"/>
</dbReference>
<dbReference type="InterPro" id="IPR036736">
    <property type="entry name" value="ACP-like_sf"/>
</dbReference>
<dbReference type="InterPro" id="IPR009081">
    <property type="entry name" value="PP-bd_ACP"/>
</dbReference>
<dbReference type="NCBIfam" id="TIGR00517">
    <property type="entry name" value="acyl_carrier"/>
    <property type="match status" value="1"/>
</dbReference>
<dbReference type="NCBIfam" id="NF002148">
    <property type="entry name" value="PRK00982.1-2"/>
    <property type="match status" value="1"/>
</dbReference>
<dbReference type="NCBIfam" id="NF002150">
    <property type="entry name" value="PRK00982.1-4"/>
    <property type="match status" value="1"/>
</dbReference>
<dbReference type="NCBIfam" id="NF002151">
    <property type="entry name" value="PRK00982.1-5"/>
    <property type="match status" value="1"/>
</dbReference>
<dbReference type="PANTHER" id="PTHR20863">
    <property type="entry name" value="ACYL CARRIER PROTEIN"/>
    <property type="match status" value="1"/>
</dbReference>
<dbReference type="PANTHER" id="PTHR20863:SF76">
    <property type="entry name" value="CARRIER DOMAIN-CONTAINING PROTEIN"/>
    <property type="match status" value="1"/>
</dbReference>
<dbReference type="Pfam" id="PF00550">
    <property type="entry name" value="PP-binding"/>
    <property type="match status" value="1"/>
</dbReference>
<dbReference type="SUPFAM" id="SSF47336">
    <property type="entry name" value="ACP-like"/>
    <property type="match status" value="1"/>
</dbReference>
<dbReference type="PROSITE" id="PS50075">
    <property type="entry name" value="CARRIER"/>
    <property type="match status" value="1"/>
</dbReference>
<protein>
    <recommendedName>
        <fullName evidence="1">Acyl carrier protein</fullName>
        <shortName evidence="1">ACP</shortName>
    </recommendedName>
</protein>
<gene>
    <name evidence="1" type="primary">acpP</name>
    <name type="ordered locus">PG_1765</name>
</gene>
<reference key="1">
    <citation type="journal article" date="2003" name="J. Bacteriol.">
        <title>Complete genome sequence of the oral pathogenic bacterium Porphyromonas gingivalis strain W83.</title>
        <authorList>
            <person name="Nelson K.E."/>
            <person name="Fleischmann R.D."/>
            <person name="DeBoy R.T."/>
            <person name="Paulsen I.T."/>
            <person name="Fouts D.E."/>
            <person name="Eisen J.A."/>
            <person name="Daugherty S.C."/>
            <person name="Dodson R.J."/>
            <person name="Durkin A.S."/>
            <person name="Gwinn M.L."/>
            <person name="Haft D.H."/>
            <person name="Kolonay J.F."/>
            <person name="Nelson W.C."/>
            <person name="Mason T.M."/>
            <person name="Tallon L."/>
            <person name="Gray J."/>
            <person name="Granger D."/>
            <person name="Tettelin H."/>
            <person name="Dong H."/>
            <person name="Galvin J.L."/>
            <person name="Duncan M.J."/>
            <person name="Dewhirst F.E."/>
            <person name="Fraser C.M."/>
        </authorList>
    </citation>
    <scope>NUCLEOTIDE SEQUENCE [LARGE SCALE GENOMIC DNA]</scope>
    <source>
        <strain>ATCC BAA-308 / W83</strain>
    </source>
</reference>